<dbReference type="EMBL" id="CP000538">
    <property type="protein sequence ID" value="EAQ72580.1"/>
    <property type="molecule type" value="Genomic_DNA"/>
</dbReference>
<dbReference type="RefSeq" id="WP_002851332.1">
    <property type="nucleotide sequence ID" value="NC_008787.1"/>
</dbReference>
<dbReference type="SMR" id="A1W1J8"/>
<dbReference type="KEGG" id="cjj:CJJ81176_1583"/>
<dbReference type="eggNOG" id="COG0203">
    <property type="taxonomic scope" value="Bacteria"/>
</dbReference>
<dbReference type="HOGENOM" id="CLU_074407_2_0_7"/>
<dbReference type="Proteomes" id="UP000000646">
    <property type="component" value="Chromosome"/>
</dbReference>
<dbReference type="GO" id="GO:0022625">
    <property type="term" value="C:cytosolic large ribosomal subunit"/>
    <property type="evidence" value="ECO:0007669"/>
    <property type="project" value="TreeGrafter"/>
</dbReference>
<dbReference type="GO" id="GO:0003735">
    <property type="term" value="F:structural constituent of ribosome"/>
    <property type="evidence" value="ECO:0007669"/>
    <property type="project" value="InterPro"/>
</dbReference>
<dbReference type="GO" id="GO:0006412">
    <property type="term" value="P:translation"/>
    <property type="evidence" value="ECO:0007669"/>
    <property type="project" value="UniProtKB-UniRule"/>
</dbReference>
<dbReference type="FunFam" id="3.90.1030.10:FF:000003">
    <property type="entry name" value="50S ribosomal protein L17"/>
    <property type="match status" value="1"/>
</dbReference>
<dbReference type="Gene3D" id="3.90.1030.10">
    <property type="entry name" value="Ribosomal protein L17"/>
    <property type="match status" value="1"/>
</dbReference>
<dbReference type="HAMAP" id="MF_01368">
    <property type="entry name" value="Ribosomal_bL17"/>
    <property type="match status" value="1"/>
</dbReference>
<dbReference type="InterPro" id="IPR000456">
    <property type="entry name" value="Ribosomal_bL17"/>
</dbReference>
<dbReference type="InterPro" id="IPR047859">
    <property type="entry name" value="Ribosomal_bL17_CS"/>
</dbReference>
<dbReference type="InterPro" id="IPR036373">
    <property type="entry name" value="Ribosomal_bL17_sf"/>
</dbReference>
<dbReference type="NCBIfam" id="TIGR00059">
    <property type="entry name" value="L17"/>
    <property type="match status" value="1"/>
</dbReference>
<dbReference type="PANTHER" id="PTHR14413:SF16">
    <property type="entry name" value="LARGE RIBOSOMAL SUBUNIT PROTEIN BL17M"/>
    <property type="match status" value="1"/>
</dbReference>
<dbReference type="PANTHER" id="PTHR14413">
    <property type="entry name" value="RIBOSOMAL PROTEIN L17"/>
    <property type="match status" value="1"/>
</dbReference>
<dbReference type="Pfam" id="PF01196">
    <property type="entry name" value="Ribosomal_L17"/>
    <property type="match status" value="1"/>
</dbReference>
<dbReference type="SUPFAM" id="SSF64263">
    <property type="entry name" value="Prokaryotic ribosomal protein L17"/>
    <property type="match status" value="1"/>
</dbReference>
<dbReference type="PROSITE" id="PS01167">
    <property type="entry name" value="RIBOSOMAL_L17"/>
    <property type="match status" value="1"/>
</dbReference>
<name>RL17_CAMJJ</name>
<gene>
    <name evidence="1" type="primary">rplQ</name>
    <name type="ordered locus">CJJ81176_1583</name>
</gene>
<protein>
    <recommendedName>
        <fullName evidence="1">Large ribosomal subunit protein bL17</fullName>
    </recommendedName>
    <alternativeName>
        <fullName evidence="2">50S ribosomal protein L17</fullName>
    </alternativeName>
</protein>
<organism>
    <name type="scientific">Campylobacter jejuni subsp. jejuni serotype O:23/36 (strain 81-176)</name>
    <dbReference type="NCBI Taxonomy" id="354242"/>
    <lineage>
        <taxon>Bacteria</taxon>
        <taxon>Pseudomonadati</taxon>
        <taxon>Campylobacterota</taxon>
        <taxon>Epsilonproteobacteria</taxon>
        <taxon>Campylobacterales</taxon>
        <taxon>Campylobacteraceae</taxon>
        <taxon>Campylobacter</taxon>
    </lineage>
</organism>
<reference key="1">
    <citation type="submission" date="2006-12" db="EMBL/GenBank/DDBJ databases">
        <authorList>
            <person name="Fouts D.E."/>
            <person name="Nelson K.E."/>
            <person name="Sebastian Y."/>
        </authorList>
    </citation>
    <scope>NUCLEOTIDE SEQUENCE [LARGE SCALE GENOMIC DNA]</scope>
    <source>
        <strain>81-176</strain>
    </source>
</reference>
<sequence length="117" mass="13248">MRHKHGYRKLGRTSSHRAALLKNLTIALVNSGKIETTLPKAKELRGYVERLITRARLGDFNAHRAVFASLQDKNATNKLVTEIAPKFKDRNGGYTRIIKTRIRRGDAAEMAFIEFVA</sequence>
<accession>A1W1J8</accession>
<feature type="chain" id="PRO_1000055792" description="Large ribosomal subunit protein bL17">
    <location>
        <begin position="1"/>
        <end position="117"/>
    </location>
</feature>
<evidence type="ECO:0000255" key="1">
    <source>
        <dbReference type="HAMAP-Rule" id="MF_01368"/>
    </source>
</evidence>
<evidence type="ECO:0000305" key="2"/>
<comment type="subunit">
    <text evidence="1">Part of the 50S ribosomal subunit. Contacts protein L32.</text>
</comment>
<comment type="similarity">
    <text evidence="1">Belongs to the bacterial ribosomal protein bL17 family.</text>
</comment>
<proteinExistence type="inferred from homology"/>
<keyword id="KW-0687">Ribonucleoprotein</keyword>
<keyword id="KW-0689">Ribosomal protein</keyword>